<feature type="chain" id="PRO_1000081511" description="Peptidase B">
    <location>
        <begin position="1"/>
        <end position="427"/>
    </location>
</feature>
<feature type="active site" evidence="1">
    <location>
        <position position="207"/>
    </location>
</feature>
<feature type="active site" evidence="1">
    <location>
        <position position="281"/>
    </location>
</feature>
<feature type="binding site" evidence="1">
    <location>
        <position position="195"/>
    </location>
    <ligand>
        <name>Mn(2+)</name>
        <dbReference type="ChEBI" id="CHEBI:29035"/>
        <label>2</label>
    </ligand>
</feature>
<feature type="binding site" evidence="1">
    <location>
        <position position="200"/>
    </location>
    <ligand>
        <name>Mn(2+)</name>
        <dbReference type="ChEBI" id="CHEBI:29035"/>
        <label>1</label>
    </ligand>
</feature>
<feature type="binding site" evidence="1">
    <location>
        <position position="200"/>
    </location>
    <ligand>
        <name>Mn(2+)</name>
        <dbReference type="ChEBI" id="CHEBI:29035"/>
        <label>2</label>
    </ligand>
</feature>
<feature type="binding site" evidence="1">
    <location>
        <position position="218"/>
    </location>
    <ligand>
        <name>Mn(2+)</name>
        <dbReference type="ChEBI" id="CHEBI:29035"/>
        <label>2</label>
    </ligand>
</feature>
<feature type="binding site" evidence="1">
    <location>
        <position position="277"/>
    </location>
    <ligand>
        <name>Mn(2+)</name>
        <dbReference type="ChEBI" id="CHEBI:29035"/>
        <label>1</label>
    </ligand>
</feature>
<feature type="binding site" evidence="1">
    <location>
        <position position="279"/>
    </location>
    <ligand>
        <name>Mn(2+)</name>
        <dbReference type="ChEBI" id="CHEBI:29035"/>
        <label>1</label>
    </ligand>
</feature>
<feature type="binding site" evidence="1">
    <location>
        <position position="279"/>
    </location>
    <ligand>
        <name>Mn(2+)</name>
        <dbReference type="ChEBI" id="CHEBI:29035"/>
        <label>2</label>
    </ligand>
</feature>
<comment type="function">
    <text evidence="1">Probably plays an important role in intracellular peptide degradation.</text>
</comment>
<comment type="catalytic activity">
    <reaction evidence="1">
        <text>Release of an N-terminal amino acid, Xaa, from a peptide or arylamide. Xaa is preferably Glu or Asp but may be other amino acids, including Leu, Met, His, Cys and Gln.</text>
        <dbReference type="EC" id="3.4.11.23"/>
    </reaction>
</comment>
<comment type="cofactor">
    <cofactor evidence="1">
        <name>Mn(2+)</name>
        <dbReference type="ChEBI" id="CHEBI:29035"/>
    </cofactor>
    <text evidence="1">Binds 2 manganese ions per subunit.</text>
</comment>
<comment type="subunit">
    <text evidence="1">Homohexamer.</text>
</comment>
<comment type="subcellular location">
    <subcellularLocation>
        <location evidence="1">Cytoplasm</location>
    </subcellularLocation>
</comment>
<comment type="similarity">
    <text evidence="1">Belongs to the peptidase M17 family.</text>
</comment>
<protein>
    <recommendedName>
        <fullName evidence="1">Peptidase B</fullName>
        <ecNumber evidence="1">3.4.11.23</ecNumber>
    </recommendedName>
    <alternativeName>
        <fullName evidence="1">Aminopeptidase B</fullName>
    </alternativeName>
</protein>
<organism>
    <name type="scientific">Salmonella paratyphi B (strain ATCC BAA-1250 / SPB7)</name>
    <dbReference type="NCBI Taxonomy" id="1016998"/>
    <lineage>
        <taxon>Bacteria</taxon>
        <taxon>Pseudomonadati</taxon>
        <taxon>Pseudomonadota</taxon>
        <taxon>Gammaproteobacteria</taxon>
        <taxon>Enterobacterales</taxon>
        <taxon>Enterobacteriaceae</taxon>
        <taxon>Salmonella</taxon>
    </lineage>
</organism>
<sequence>MTEAMKITLSTQPADARWGDKATYSINNDGITLHLNGKDDLGLIQRAARKIDGLGIKQVALTGEGWDTERCWAFWAGYKGPKGVRTVMWPDLDDAQRQELDNRLTIIDWVRDTINAPAEELGPEQLAQRAVDLLCSVACDSVTYRITKGEDLREQNYMGLHTVGRGSERPPVLLALDYNPTGDKDAPVYACLVGKGITFDSGGYSIKQSAFMDSMKSDMGGAATVTGALAFAITRGLNKRVKLFLCCADNLISGNAFKLGDIIRYRNGKNVEVMNTDAEGRLVLADGLIDASAQHPQLIIDMATLTGAAKTALGNDYHALFSFDDTLAGRLLTSAAQENEPFWRLPLAEFHRNQLPSNFAELNNTGSAAYPAGASTAAGFLSHFVENYREGWLHIDCSATYRKAPVEQWAAGATGLGVRTIANLLTA</sequence>
<proteinExistence type="inferred from homology"/>
<evidence type="ECO:0000255" key="1">
    <source>
        <dbReference type="HAMAP-Rule" id="MF_00504"/>
    </source>
</evidence>
<dbReference type="EC" id="3.4.11.23" evidence="1"/>
<dbReference type="EMBL" id="CP000886">
    <property type="protein sequence ID" value="ABX65833.1"/>
    <property type="molecule type" value="Genomic_DNA"/>
</dbReference>
<dbReference type="RefSeq" id="WP_000133541.1">
    <property type="nucleotide sequence ID" value="NC_010102.1"/>
</dbReference>
<dbReference type="SMR" id="A9N1Y3"/>
<dbReference type="MEROPS" id="M17.004"/>
<dbReference type="KEGG" id="spq:SPAB_00398"/>
<dbReference type="PATRIC" id="fig|1016998.12.peg.376"/>
<dbReference type="HOGENOM" id="CLU_013734_7_1_6"/>
<dbReference type="BioCyc" id="SENT1016998:SPAB_RS01635-MONOMER"/>
<dbReference type="Proteomes" id="UP000008556">
    <property type="component" value="Chromosome"/>
</dbReference>
<dbReference type="GO" id="GO:0005737">
    <property type="term" value="C:cytoplasm"/>
    <property type="evidence" value="ECO:0007669"/>
    <property type="project" value="UniProtKB-SubCell"/>
</dbReference>
<dbReference type="GO" id="GO:0030145">
    <property type="term" value="F:manganese ion binding"/>
    <property type="evidence" value="ECO:0007669"/>
    <property type="project" value="UniProtKB-UniRule"/>
</dbReference>
<dbReference type="GO" id="GO:0070006">
    <property type="term" value="F:metalloaminopeptidase activity"/>
    <property type="evidence" value="ECO:0007669"/>
    <property type="project" value="InterPro"/>
</dbReference>
<dbReference type="GO" id="GO:0006508">
    <property type="term" value="P:proteolysis"/>
    <property type="evidence" value="ECO:0007669"/>
    <property type="project" value="UniProtKB-UniRule"/>
</dbReference>
<dbReference type="CDD" id="cd00433">
    <property type="entry name" value="Peptidase_M17"/>
    <property type="match status" value="1"/>
</dbReference>
<dbReference type="FunFam" id="3.40.630.10:FF:000037">
    <property type="entry name" value="Peptidase B"/>
    <property type="match status" value="1"/>
</dbReference>
<dbReference type="Gene3D" id="3.40.630.10">
    <property type="entry name" value="Zn peptidases"/>
    <property type="match status" value="1"/>
</dbReference>
<dbReference type="HAMAP" id="MF_00504">
    <property type="entry name" value="Aminopeptidase_M17"/>
    <property type="match status" value="1"/>
</dbReference>
<dbReference type="InterPro" id="IPR011356">
    <property type="entry name" value="Leucine_aapep/pepB"/>
</dbReference>
<dbReference type="InterPro" id="IPR047620">
    <property type="entry name" value="M17_PepB-like_N"/>
</dbReference>
<dbReference type="InterPro" id="IPR008330">
    <property type="entry name" value="Pept_M17_PepB"/>
</dbReference>
<dbReference type="InterPro" id="IPR000819">
    <property type="entry name" value="Peptidase_M17_C"/>
</dbReference>
<dbReference type="NCBIfam" id="NF003450">
    <property type="entry name" value="PRK05015.1"/>
    <property type="match status" value="1"/>
</dbReference>
<dbReference type="PANTHER" id="PTHR11963">
    <property type="entry name" value="LEUCINE AMINOPEPTIDASE-RELATED"/>
    <property type="match status" value="1"/>
</dbReference>
<dbReference type="PANTHER" id="PTHR11963:SF20">
    <property type="entry name" value="PEPTIDASE B"/>
    <property type="match status" value="1"/>
</dbReference>
<dbReference type="Pfam" id="PF12404">
    <property type="entry name" value="DUF3663"/>
    <property type="match status" value="1"/>
</dbReference>
<dbReference type="Pfam" id="PF00883">
    <property type="entry name" value="Peptidase_M17"/>
    <property type="match status" value="1"/>
</dbReference>
<dbReference type="PIRSF" id="PIRSF036388">
    <property type="entry name" value="Ctsl_amnpptdse_B"/>
    <property type="match status" value="1"/>
</dbReference>
<dbReference type="PRINTS" id="PR00481">
    <property type="entry name" value="LAMNOPPTDASE"/>
</dbReference>
<dbReference type="SUPFAM" id="SSF53187">
    <property type="entry name" value="Zn-dependent exopeptidases"/>
    <property type="match status" value="1"/>
</dbReference>
<dbReference type="PROSITE" id="PS00631">
    <property type="entry name" value="CYTOSOL_AP"/>
    <property type="match status" value="1"/>
</dbReference>
<gene>
    <name evidence="1" type="primary">pepB</name>
    <name type="ordered locus">SPAB_00398</name>
</gene>
<name>PEPB_SALPB</name>
<keyword id="KW-0031">Aminopeptidase</keyword>
<keyword id="KW-0963">Cytoplasm</keyword>
<keyword id="KW-0378">Hydrolase</keyword>
<keyword id="KW-0464">Manganese</keyword>
<keyword id="KW-0479">Metal-binding</keyword>
<keyword id="KW-0645">Protease</keyword>
<reference key="1">
    <citation type="submission" date="2007-11" db="EMBL/GenBank/DDBJ databases">
        <authorList>
            <consortium name="The Salmonella enterica serovar Paratyphi B Genome Sequencing Project"/>
            <person name="McClelland M."/>
            <person name="Sanderson E.K."/>
            <person name="Porwollik S."/>
            <person name="Spieth J."/>
            <person name="Clifton W.S."/>
            <person name="Fulton R."/>
            <person name="Cordes M."/>
            <person name="Wollam A."/>
            <person name="Shah N."/>
            <person name="Pepin K."/>
            <person name="Bhonagiri V."/>
            <person name="Nash W."/>
            <person name="Johnson M."/>
            <person name="Thiruvilangam P."/>
            <person name="Wilson R."/>
        </authorList>
    </citation>
    <scope>NUCLEOTIDE SEQUENCE [LARGE SCALE GENOMIC DNA]</scope>
    <source>
        <strain>ATCC BAA-1250 / SPB7</strain>
    </source>
</reference>
<accession>A9N1Y3</accession>